<sequence length="1174" mass="135079">MNATDAESRKPENKPSSESSSSGSTSGSSDGEVSSKTYFKNNKSKVLSGQREVVLEVVRDLSYTICKEAEEKLVERFPRKDGSNEMLPKEDSINTNHNYTTDSDEHPVELTTKTEECKNTEKTKKKSFVRALSKDKQLSAYRSRSRSTRLSYSGHISRTHSVEKSLSRYKKSVLRNRRTSFGHGRDSSTTKRSVSRDKDNRLRRRIGSSRSHTRSHSRFRRSEKKLPSRSPRRIRSQERRHERRRSMSSDYERIALRRSEPIKRRDKDEFFKNNKKVSGDIKKGKGNDNGTVAELEAKITERQRKSLDILTSRTGGACLTPDKLRMIQAEITDKSSAAYQSIAREALKKYIHGYINKVNVDSVAVITRKLLKDNIVRGRGVLCHSIIQAQATSPKFTHVYAAMVAIINSKFPNIGELLLKRLVIQFKRAFGCNDKTVCLTSSHFIAHLVNQRVAHEILALEILTLLIESPTDDNVEVAITFLKECGMKLTEVSSDRVGGIFELLKNILHQGKLDKRVQYMIKVLFQVRRDGFKDHQSIIESLELVEEYAQFTHLLLLEDVTYPKDILNEFKFDDQYETNEEKYKALSKNILGSHASDSDGSFGSGSNSETALSDCDKGKNEVNDKYTSGDIIDETKPNLIALRRTIYLTLNSCLDYEECAQKLMKMQLKTCQQNEFCQILLDCCAEQRTYEKFYGLLTHRICKMNKSFIEPFKEIFKDICQTTHCLDTNRLRNISKFFAHLLFTDAISWDVLDCIKLTEDEAITSRCIFIKSFFQELVEYMGLYHFNKKLKTEVLAGTLAGLFPKDNPRNIRFSINFFTSIGLGGITNELCQLLKIAPKSAPSSSSSSSLSSELSAPSDDDSSSDSENKKKHKGKNKKMTKKKNPSKKKEETKKIVGKNKIAAKNKTIKRRTDKDNSSSKDNFLKSESSSNESISLDSLSSELFAPSSYSSSESSNDSESKEKHKGKNKKMTKKKNPSNKREKTKKKLSKNKKAPNKNTKKRMTEKDISSSESSISESKSLNCSASNQNENEKRKKRVTSKSRTKRVKMFKQCQWVDADNQRDIKRKKRAEYRYEPLVYRKRNEEYLKKGGPNCRKDNYGNRQNHEISQRHDSEIKRRREERKKRHHEKNHSREYKRSKLGPCQREYFLYMCCQFYYPCTFQCLCQNCHFTFYS</sequence>
<proteinExistence type="evidence at transcript level"/>
<reference key="1">
    <citation type="journal article" date="2017" name="Science">
        <title>Male sex in houseflies is determined by Mdmd, a paralog of the generic splice factor gene CWC22.</title>
        <authorList>
            <person name="Sharma A."/>
            <person name="Heinze S.D."/>
            <person name="Wu Y."/>
            <person name="Kohlbrenner T."/>
            <person name="Morilla I."/>
            <person name="Brunner C."/>
            <person name="Wimmer E.A."/>
            <person name="van de Zande L."/>
            <person name="Robinson M.D."/>
            <person name="Beukeboom L.W."/>
            <person name="Bopp D."/>
        </authorList>
    </citation>
    <scope>NUCLEOTIDE SEQUENCE [GENOMIC DNA]</scope>
    <scope>DEVELOPMENTAL STAGE</scope>
</reference>
<protein>
    <recommendedName>
        <fullName evidence="6">Male determiner protein Mdmd(Y)</fullName>
    </recommendedName>
    <alternativeName>
        <fullName evidence="7">Male determiner encoded on chromosome Y</fullName>
    </alternativeName>
</protein>
<accession>P0DP79</accession>
<accession>A0A1Y0AWT3</accession>
<keyword id="KW-0221">Differentiation</keyword>
<keyword id="KW-0507">mRNA processing</keyword>
<keyword id="KW-0508">mRNA splicing</keyword>
<keyword id="KW-0539">Nucleus</keyword>
<keyword id="KW-1185">Reference proteome</keyword>
<keyword id="KW-0726">Sexual differentiation</keyword>
<feature type="chain" id="PRO_0000441324" description="Male determiner protein Mdmd(Y)">
    <location>
        <begin position="1"/>
        <end position="1174"/>
    </location>
</feature>
<feature type="domain" description="MIF4G" evidence="3">
    <location>
        <begin position="348"/>
        <end position="531"/>
    </location>
</feature>
<feature type="domain" description="MI" evidence="3">
    <location>
        <begin position="641"/>
        <end position="757"/>
    </location>
</feature>
<feature type="region of interest" description="Disordered" evidence="4">
    <location>
        <begin position="1"/>
        <end position="51"/>
    </location>
</feature>
<feature type="region of interest" description="Disordered" evidence="4">
    <location>
        <begin position="79"/>
        <end position="109"/>
    </location>
</feature>
<feature type="region of interest" description="Disordered" evidence="4">
    <location>
        <begin position="136"/>
        <end position="259"/>
    </location>
</feature>
<feature type="region of interest" description="Disordered" evidence="4">
    <location>
        <begin position="597"/>
        <end position="616"/>
    </location>
</feature>
<feature type="region of interest" description="Disordered" evidence="4">
    <location>
        <begin position="840"/>
        <end position="1045"/>
    </location>
</feature>
<feature type="region of interest" description="Disordered" evidence="4">
    <location>
        <begin position="1089"/>
        <end position="1135"/>
    </location>
</feature>
<feature type="compositionally biased region" description="Basic and acidic residues" evidence="4">
    <location>
        <begin position="1"/>
        <end position="15"/>
    </location>
</feature>
<feature type="compositionally biased region" description="Low complexity" evidence="4">
    <location>
        <begin position="16"/>
        <end position="35"/>
    </location>
</feature>
<feature type="compositionally biased region" description="Polar residues" evidence="4">
    <location>
        <begin position="36"/>
        <end position="47"/>
    </location>
</feature>
<feature type="compositionally biased region" description="Basic and acidic residues" evidence="4">
    <location>
        <begin position="79"/>
        <end position="92"/>
    </location>
</feature>
<feature type="compositionally biased region" description="Low complexity" evidence="4">
    <location>
        <begin position="138"/>
        <end position="153"/>
    </location>
</feature>
<feature type="compositionally biased region" description="Basic residues" evidence="4">
    <location>
        <begin position="167"/>
        <end position="180"/>
    </location>
</feature>
<feature type="compositionally biased region" description="Basic and acidic residues" evidence="4">
    <location>
        <begin position="183"/>
        <end position="200"/>
    </location>
</feature>
<feature type="compositionally biased region" description="Basic residues" evidence="4">
    <location>
        <begin position="201"/>
        <end position="223"/>
    </location>
</feature>
<feature type="compositionally biased region" description="Basic and acidic residues" evidence="4">
    <location>
        <begin position="235"/>
        <end position="259"/>
    </location>
</feature>
<feature type="compositionally biased region" description="Low complexity" evidence="4">
    <location>
        <begin position="597"/>
        <end position="608"/>
    </location>
</feature>
<feature type="compositionally biased region" description="Low complexity" evidence="4">
    <location>
        <begin position="840"/>
        <end position="857"/>
    </location>
</feature>
<feature type="compositionally biased region" description="Basic residues" evidence="4">
    <location>
        <begin position="869"/>
        <end position="886"/>
    </location>
</feature>
<feature type="compositionally biased region" description="Basic residues" evidence="4">
    <location>
        <begin position="895"/>
        <end position="909"/>
    </location>
</feature>
<feature type="compositionally biased region" description="Basic and acidic residues" evidence="4">
    <location>
        <begin position="910"/>
        <end position="924"/>
    </location>
</feature>
<feature type="compositionally biased region" description="Low complexity" evidence="4">
    <location>
        <begin position="926"/>
        <end position="957"/>
    </location>
</feature>
<feature type="compositionally biased region" description="Basic residues" evidence="4">
    <location>
        <begin position="963"/>
        <end position="1001"/>
    </location>
</feature>
<feature type="compositionally biased region" description="Low complexity" evidence="4">
    <location>
        <begin position="1010"/>
        <end position="1020"/>
    </location>
</feature>
<feature type="compositionally biased region" description="Basic residues" evidence="4">
    <location>
        <begin position="1034"/>
        <end position="1045"/>
    </location>
</feature>
<feature type="compositionally biased region" description="Basic and acidic residues" evidence="4">
    <location>
        <begin position="1089"/>
        <end position="1118"/>
    </location>
</feature>
<feature type="compositionally biased region" description="Basic residues" evidence="4">
    <location>
        <begin position="1119"/>
        <end position="1130"/>
    </location>
</feature>
<gene>
    <name evidence="6" type="primary">Mdmd</name>
</gene>
<organism>
    <name type="scientific">Musca domestica</name>
    <name type="common">House fly</name>
    <dbReference type="NCBI Taxonomy" id="7370"/>
    <lineage>
        <taxon>Eukaryota</taxon>
        <taxon>Metazoa</taxon>
        <taxon>Ecdysozoa</taxon>
        <taxon>Arthropoda</taxon>
        <taxon>Hexapoda</taxon>
        <taxon>Insecta</taxon>
        <taxon>Pterygota</taxon>
        <taxon>Neoptera</taxon>
        <taxon>Endopterygota</taxon>
        <taxon>Diptera</taxon>
        <taxon>Brachycera</taxon>
        <taxon>Muscomorpha</taxon>
        <taxon>Muscoidea</taxon>
        <taxon>Muscidae</taxon>
        <taxon>Musca</taxon>
    </lineage>
</organism>
<name>MDMY_MUSDO</name>
<evidence type="ECO:0000250" key="1">
    <source>
        <dbReference type="UniProtKB" id="P0DP78"/>
    </source>
</evidence>
<evidence type="ECO:0000250" key="2">
    <source>
        <dbReference type="UniProtKB" id="Q9HCG8"/>
    </source>
</evidence>
<evidence type="ECO:0000255" key="3">
    <source>
        <dbReference type="PROSITE-ProRule" id="PRU00698"/>
    </source>
</evidence>
<evidence type="ECO:0000256" key="4">
    <source>
        <dbReference type="SAM" id="MobiDB-lite"/>
    </source>
</evidence>
<evidence type="ECO:0000269" key="5">
    <source>
    </source>
</evidence>
<evidence type="ECO:0000303" key="6">
    <source>
    </source>
</evidence>
<evidence type="ECO:0000305" key="7"/>
<dbReference type="EMBL" id="KY020047">
    <property type="protein sequence ID" value="ART29445.1"/>
    <property type="molecule type" value="Genomic_DNA"/>
</dbReference>
<dbReference type="SMR" id="P0DP79"/>
<dbReference type="STRING" id="7370.P0DP79"/>
<dbReference type="VEuPathDB" id="VectorBase:MDOA000598"/>
<dbReference type="VEuPathDB" id="VectorBase:MDOMA2_013059"/>
<dbReference type="Proteomes" id="UP000694905">
    <property type="component" value="Unplaced"/>
</dbReference>
<dbReference type="GO" id="GO:0071013">
    <property type="term" value="C:catalytic step 2 spliceosome"/>
    <property type="evidence" value="ECO:0007669"/>
    <property type="project" value="TreeGrafter"/>
</dbReference>
<dbReference type="GO" id="GO:0016607">
    <property type="term" value="C:nuclear speck"/>
    <property type="evidence" value="ECO:0007669"/>
    <property type="project" value="UniProtKB-SubCell"/>
</dbReference>
<dbReference type="GO" id="GO:0003723">
    <property type="term" value="F:RNA binding"/>
    <property type="evidence" value="ECO:0007669"/>
    <property type="project" value="InterPro"/>
</dbReference>
<dbReference type="GO" id="GO:0030154">
    <property type="term" value="P:cell differentiation"/>
    <property type="evidence" value="ECO:0007669"/>
    <property type="project" value="UniProtKB-KW"/>
</dbReference>
<dbReference type="GO" id="GO:0030238">
    <property type="term" value="P:male sex determination"/>
    <property type="evidence" value="ECO:0000250"/>
    <property type="project" value="UniProtKB"/>
</dbReference>
<dbReference type="GO" id="GO:0046661">
    <property type="term" value="P:male sex differentiation"/>
    <property type="evidence" value="ECO:0000250"/>
    <property type="project" value="UniProtKB"/>
</dbReference>
<dbReference type="GO" id="GO:0000398">
    <property type="term" value="P:mRNA splicing, via spliceosome"/>
    <property type="evidence" value="ECO:0007669"/>
    <property type="project" value="TreeGrafter"/>
</dbReference>
<dbReference type="GO" id="GO:0048024">
    <property type="term" value="P:regulation of mRNA splicing, via spliceosome"/>
    <property type="evidence" value="ECO:0000250"/>
    <property type="project" value="UniProtKB"/>
</dbReference>
<dbReference type="FunFam" id="1.25.40.180:FF:000004">
    <property type="entry name" value="pre-mRNA-splicing factor CWC22 homolog"/>
    <property type="match status" value="1"/>
</dbReference>
<dbReference type="Gene3D" id="1.25.40.180">
    <property type="match status" value="1"/>
</dbReference>
<dbReference type="InterPro" id="IPR016024">
    <property type="entry name" value="ARM-type_fold"/>
</dbReference>
<dbReference type="InterPro" id="IPR050781">
    <property type="entry name" value="CWC22_splicing_factor"/>
</dbReference>
<dbReference type="InterPro" id="IPR003891">
    <property type="entry name" value="Initiation_fac_eIF4g_MI"/>
</dbReference>
<dbReference type="InterPro" id="IPR003890">
    <property type="entry name" value="MIF4G-like_typ-3"/>
</dbReference>
<dbReference type="PANTHER" id="PTHR18034">
    <property type="entry name" value="CELL CYCLE CONTROL PROTEIN CWF22-RELATED"/>
    <property type="match status" value="1"/>
</dbReference>
<dbReference type="PANTHER" id="PTHR18034:SF3">
    <property type="entry name" value="PRE-MRNA-SPLICING FACTOR CWC22 HOMOLOG"/>
    <property type="match status" value="1"/>
</dbReference>
<dbReference type="Pfam" id="PF02847">
    <property type="entry name" value="MA3"/>
    <property type="match status" value="1"/>
</dbReference>
<dbReference type="SMART" id="SM00544">
    <property type="entry name" value="MA3"/>
    <property type="match status" value="1"/>
</dbReference>
<dbReference type="SMART" id="SM00543">
    <property type="entry name" value="MIF4G"/>
    <property type="match status" value="1"/>
</dbReference>
<dbReference type="SUPFAM" id="SSF48371">
    <property type="entry name" value="ARM repeat"/>
    <property type="match status" value="1"/>
</dbReference>
<dbReference type="PROSITE" id="PS51366">
    <property type="entry name" value="MI"/>
    <property type="match status" value="1"/>
</dbReference>
<comment type="function">
    <text evidence="1 2">Male determiner protein (M-factor) that controls male somatic sexual differentiation. Acts as a dominant factor that regulates the mRNA splicing of transformer (tra) and doublesex (dsx) transcripts and promotes expression of male splice forms of tra and dsx (By similarity). Probably acts as a component of the spliceosome C complex required for mRNA splicing factor and exon-junction complex (EJC) assembly (By similarity). Hinders eIF4AIII from non-specifically binding RNA and escorts it to the splicing machinery to promote EJC assembly on mature mRNAs (By similarity).</text>
</comment>
<comment type="subunit">
    <text evidence="2">Component of the spliceosome C complex.</text>
</comment>
<comment type="subcellular location">
    <subcellularLocation>
        <location evidence="2">Nucleus speckle</location>
    </subcellularLocation>
</comment>
<comment type="developmental stage">
    <text evidence="5">Specifically expressed in early male embryos. Zygotic expression first appears in 2- to 3-hour-old embryos (cellularized blastoderm stage). Expression is then maintained throughout male development until adulthood.</text>
</comment>
<comment type="miscellaneous">
    <text>The M.domestica genome only codes for one male determiner Mdmd protein, which is encoded in the M region, and can be located at different loci on the genome (chromosomes II, III, V or Y). The M region contains a cluster of tandemly repeated Mdmd copies with only one intact copy: other copies are degenerate with large truncations and frameshifts and are assumed to be non-functional. The presence of multiple copies in the M region may preserve its integrity in a hostile non-recombining environment. This protein is encoded on chromosome Y.</text>
</comment>
<comment type="similarity">
    <text evidence="7">Belongs to the CWC22 family.</text>
</comment>